<gene>
    <name type="primary">CCRL2</name>
</gene>
<reference key="1">
    <citation type="submission" date="2006-08" db="EMBL/GenBank/DDBJ databases">
        <authorList>
            <consortium name="NIH - Mammalian Gene Collection (MGC) project"/>
        </authorList>
    </citation>
    <scope>NUCLEOTIDE SEQUENCE [LARGE SCALE MRNA]</scope>
    <source>
        <strain>Hereford</strain>
        <tissue>Hypothalamus</tissue>
    </source>
</reference>
<protein>
    <recommendedName>
        <fullName>Chemokine C-C motif receptor-like 2</fullName>
    </recommendedName>
</protein>
<name>CCRL2_BOVIN</name>
<evidence type="ECO:0000250" key="1"/>
<evidence type="ECO:0000255" key="2"/>
<evidence type="ECO:0000255" key="3">
    <source>
        <dbReference type="PROSITE-ProRule" id="PRU00521"/>
    </source>
</evidence>
<accession>Q0II78</accession>
<dbReference type="EMBL" id="BC122767">
    <property type="protein sequence ID" value="AAI22768.1"/>
    <property type="molecule type" value="mRNA"/>
</dbReference>
<dbReference type="RefSeq" id="NP_001069200.1">
    <property type="nucleotide sequence ID" value="NM_001075732.2"/>
</dbReference>
<dbReference type="RefSeq" id="XP_005223117.1">
    <property type="nucleotide sequence ID" value="XM_005223060.4"/>
</dbReference>
<dbReference type="RefSeq" id="XP_005223118.1">
    <property type="nucleotide sequence ID" value="XM_005223061.5"/>
</dbReference>
<dbReference type="RefSeq" id="XP_005223119.1">
    <property type="nucleotide sequence ID" value="XM_005223062.5"/>
</dbReference>
<dbReference type="RefSeq" id="XP_015315153.1">
    <property type="nucleotide sequence ID" value="XM_015459667.3"/>
</dbReference>
<dbReference type="RefSeq" id="XP_059735642.1">
    <property type="nucleotide sequence ID" value="XM_059879659.1"/>
</dbReference>
<dbReference type="SMR" id="Q0II78"/>
<dbReference type="FunCoup" id="Q0II78">
    <property type="interactions" value="186"/>
</dbReference>
<dbReference type="STRING" id="9913.ENSBTAP00000008096"/>
<dbReference type="GlyCosmos" id="Q0II78">
    <property type="glycosylation" value="1 site, No reported glycans"/>
</dbReference>
<dbReference type="GlyGen" id="Q0II78">
    <property type="glycosylation" value="1 site"/>
</dbReference>
<dbReference type="PaxDb" id="9913-ENSBTAP00000008096"/>
<dbReference type="Ensembl" id="ENSBTAT00000008096.6">
    <property type="protein sequence ID" value="ENSBTAP00000008096.4"/>
    <property type="gene ID" value="ENSBTAG00000006155.6"/>
</dbReference>
<dbReference type="Ensembl" id="ENSBTAT00000092366.1">
    <property type="protein sequence ID" value="ENSBTAP00000099806.1"/>
    <property type="gene ID" value="ENSBTAG00000006155.6"/>
</dbReference>
<dbReference type="Ensembl" id="ENSBTAT00000093754.1">
    <property type="protein sequence ID" value="ENSBTAP00000075298.1"/>
    <property type="gene ID" value="ENSBTAG00000006155.6"/>
</dbReference>
<dbReference type="GeneID" id="515976"/>
<dbReference type="KEGG" id="bta:515976"/>
<dbReference type="CTD" id="9034"/>
<dbReference type="VEuPathDB" id="HostDB:ENSBTAG00000006155"/>
<dbReference type="VGNC" id="VGNC:26990">
    <property type="gene designation" value="CCRL2"/>
</dbReference>
<dbReference type="eggNOG" id="KOG3656">
    <property type="taxonomic scope" value="Eukaryota"/>
</dbReference>
<dbReference type="GeneTree" id="ENSGT01020000230359"/>
<dbReference type="HOGENOM" id="CLU_009579_8_3_1"/>
<dbReference type="InParanoid" id="Q0II78"/>
<dbReference type="OMA" id="FYKPQME"/>
<dbReference type="OrthoDB" id="9802979at2759"/>
<dbReference type="TreeFam" id="TF330966"/>
<dbReference type="Reactome" id="R-BTA-380108">
    <property type="pathway name" value="Chemokine receptors bind chemokines"/>
</dbReference>
<dbReference type="Proteomes" id="UP000009136">
    <property type="component" value="Chromosome 22"/>
</dbReference>
<dbReference type="Bgee" id="ENSBTAG00000006155">
    <property type="expression patterns" value="Expressed in milk and 98 other cell types or tissues"/>
</dbReference>
<dbReference type="GO" id="GO:0005737">
    <property type="term" value="C:cytoplasm"/>
    <property type="evidence" value="ECO:0000318"/>
    <property type="project" value="GO_Central"/>
</dbReference>
<dbReference type="GO" id="GO:0009897">
    <property type="term" value="C:external side of plasma membrane"/>
    <property type="evidence" value="ECO:0000318"/>
    <property type="project" value="GO_Central"/>
</dbReference>
<dbReference type="GO" id="GO:0005886">
    <property type="term" value="C:plasma membrane"/>
    <property type="evidence" value="ECO:0000250"/>
    <property type="project" value="UniProtKB"/>
</dbReference>
<dbReference type="GO" id="GO:0019957">
    <property type="term" value="F:C-C chemokine binding"/>
    <property type="evidence" value="ECO:0000318"/>
    <property type="project" value="GO_Central"/>
</dbReference>
<dbReference type="GO" id="GO:0016493">
    <property type="term" value="F:C-C chemokine receptor activity"/>
    <property type="evidence" value="ECO:0000318"/>
    <property type="project" value="GO_Central"/>
</dbReference>
<dbReference type="GO" id="GO:0048020">
    <property type="term" value="F:CCR chemokine receptor binding"/>
    <property type="evidence" value="ECO:0007669"/>
    <property type="project" value="Ensembl"/>
</dbReference>
<dbReference type="GO" id="GO:0019722">
    <property type="term" value="P:calcium-mediated signaling"/>
    <property type="evidence" value="ECO:0000318"/>
    <property type="project" value="GO_Central"/>
</dbReference>
<dbReference type="GO" id="GO:0060326">
    <property type="term" value="P:cell chemotaxis"/>
    <property type="evidence" value="ECO:0000318"/>
    <property type="project" value="GO_Central"/>
</dbReference>
<dbReference type="GO" id="GO:0006955">
    <property type="term" value="P:immune response"/>
    <property type="evidence" value="ECO:0000318"/>
    <property type="project" value="GO_Central"/>
</dbReference>
<dbReference type="GO" id="GO:0006954">
    <property type="term" value="P:inflammatory response"/>
    <property type="evidence" value="ECO:0000250"/>
    <property type="project" value="UniProtKB"/>
</dbReference>
<dbReference type="GO" id="GO:0007204">
    <property type="term" value="P:positive regulation of cytosolic calcium ion concentration"/>
    <property type="evidence" value="ECO:0000318"/>
    <property type="project" value="GO_Central"/>
</dbReference>
<dbReference type="CDD" id="cd15171">
    <property type="entry name" value="7tmA_CCRL2"/>
    <property type="match status" value="1"/>
</dbReference>
<dbReference type="FunFam" id="1.20.1070.10:FF:000130">
    <property type="entry name" value="Chemokine (C-C motif) receptor 2"/>
    <property type="match status" value="1"/>
</dbReference>
<dbReference type="Gene3D" id="1.20.1070.10">
    <property type="entry name" value="Rhodopsin 7-helix transmembrane proteins"/>
    <property type="match status" value="1"/>
</dbReference>
<dbReference type="InterPro" id="IPR050119">
    <property type="entry name" value="CCR1-9-like"/>
</dbReference>
<dbReference type="InterPro" id="IPR000355">
    <property type="entry name" value="Chemokine_rcpt"/>
</dbReference>
<dbReference type="InterPro" id="IPR000276">
    <property type="entry name" value="GPCR_Rhodpsn"/>
</dbReference>
<dbReference type="InterPro" id="IPR017452">
    <property type="entry name" value="GPCR_Rhodpsn_7TM"/>
</dbReference>
<dbReference type="PANTHER" id="PTHR10489:SF655">
    <property type="entry name" value="C-C CHEMOKINE RECEPTOR-LIKE 2"/>
    <property type="match status" value="1"/>
</dbReference>
<dbReference type="PANTHER" id="PTHR10489">
    <property type="entry name" value="CELL ADHESION MOLECULE"/>
    <property type="match status" value="1"/>
</dbReference>
<dbReference type="Pfam" id="PF00001">
    <property type="entry name" value="7tm_1"/>
    <property type="match status" value="1"/>
</dbReference>
<dbReference type="PRINTS" id="PR00657">
    <property type="entry name" value="CCCHEMOKINER"/>
</dbReference>
<dbReference type="PRINTS" id="PR00237">
    <property type="entry name" value="GPCRRHODOPSN"/>
</dbReference>
<dbReference type="SUPFAM" id="SSF81321">
    <property type="entry name" value="Family A G protein-coupled receptor-like"/>
    <property type="match status" value="1"/>
</dbReference>
<dbReference type="PROSITE" id="PS50262">
    <property type="entry name" value="G_PROTEIN_RECEP_F1_2"/>
    <property type="match status" value="1"/>
</dbReference>
<keyword id="KW-1003">Cell membrane</keyword>
<keyword id="KW-1015">Disulfide bond</keyword>
<keyword id="KW-0297">G-protein coupled receptor</keyword>
<keyword id="KW-0325">Glycoprotein</keyword>
<keyword id="KW-0472">Membrane</keyword>
<keyword id="KW-0675">Receptor</keyword>
<keyword id="KW-1185">Reference proteome</keyword>
<keyword id="KW-0807">Transducer</keyword>
<keyword id="KW-0812">Transmembrane</keyword>
<keyword id="KW-1133">Transmembrane helix</keyword>
<comment type="function">
    <text evidence="1">Receptor for CCL19 and chemerin/RARRES2. Does not appear to be a signaling receptor, but may have a role in modulating chemokine-triggered immune responses by capturing and internalizing CCL19 or by presenting RARRES2 ligand to CMKLR1, a functional signaling receptor. Plays a critical role for the development of Th2 responses (By similarity).</text>
</comment>
<comment type="subcellular location">
    <subcellularLocation>
        <location evidence="1">Cell membrane</location>
        <topology evidence="1">Multi-pass membrane protein</topology>
    </subcellularLocation>
</comment>
<comment type="domain">
    <text evidence="1">Lacks the conserved DRYLAIV motif in the second intracellular loop that is required for signaling of functional chemokine receptors.</text>
</comment>
<comment type="similarity">
    <text evidence="3">Belongs to the G-protein coupled receptor 1 family.</text>
</comment>
<sequence>MANYTPAPEDDYDVFIEDDLSDDEIEPCTPYDPKILSAQLVPYLYTTVFMVGLLDNILVVFILVKYKGLRQAENMSFLNLALSNLGFLLTLPFWAYAASHGEGFDDPLCKILLLLYSIGLYSEAFFNVLLTVQRYKEFFHVRRRFSACRTVAGSIFISVLVWVTATLVTLPELVSYKPQMQSQKYKCFFTGLHFLPADETFWKHFLTLKMNILGFLLPLFAFVYCYVRMRKTLQFRERNYGLFKLVFTIMAVFLLMWGPYNIVLFLSAFNEHFSLHGCGSSYNLNKSVQITRIIAATHCCVNPLLYVFLDKAFRKHLCHLFYLCSDTAPQPTEEPAQGASGEEYHLSS</sequence>
<proteinExistence type="evidence at transcript level"/>
<feature type="chain" id="PRO_0000409374" description="Chemokine C-C motif receptor-like 2">
    <location>
        <begin position="1"/>
        <end position="348"/>
    </location>
</feature>
<feature type="topological domain" description="Extracellular" evidence="2">
    <location>
        <begin position="1"/>
        <end position="43"/>
    </location>
</feature>
<feature type="transmembrane region" description="Helical; Name=1" evidence="2">
    <location>
        <begin position="44"/>
        <end position="64"/>
    </location>
</feature>
<feature type="topological domain" description="Cytoplasmic" evidence="2">
    <location>
        <begin position="65"/>
        <end position="76"/>
    </location>
</feature>
<feature type="transmembrane region" description="Helical; Name=2" evidence="2">
    <location>
        <begin position="77"/>
        <end position="97"/>
    </location>
</feature>
<feature type="topological domain" description="Extracellular" evidence="2">
    <location>
        <begin position="98"/>
        <end position="110"/>
    </location>
</feature>
<feature type="transmembrane region" description="Helical; Name=3" evidence="2">
    <location>
        <begin position="111"/>
        <end position="131"/>
    </location>
</feature>
<feature type="topological domain" description="Cytoplasmic" evidence="2">
    <location>
        <begin position="132"/>
        <end position="150"/>
    </location>
</feature>
<feature type="transmembrane region" description="Helical; Name=4" evidence="2">
    <location>
        <begin position="151"/>
        <end position="171"/>
    </location>
</feature>
<feature type="topological domain" description="Extracellular" evidence="2">
    <location>
        <begin position="172"/>
        <end position="204"/>
    </location>
</feature>
<feature type="transmembrane region" description="Helical; Name=5" evidence="2">
    <location>
        <begin position="205"/>
        <end position="225"/>
    </location>
</feature>
<feature type="topological domain" description="Cytoplasmic" evidence="2">
    <location>
        <begin position="226"/>
        <end position="244"/>
    </location>
</feature>
<feature type="transmembrane region" description="Helical; Name=6" evidence="2">
    <location>
        <begin position="245"/>
        <end position="265"/>
    </location>
</feature>
<feature type="topological domain" description="Extracellular" evidence="2">
    <location>
        <begin position="266"/>
        <end position="292"/>
    </location>
</feature>
<feature type="transmembrane region" description="Helical; Name=7" evidence="2">
    <location>
        <begin position="293"/>
        <end position="313"/>
    </location>
</feature>
<feature type="topological domain" description="Cytoplasmic" evidence="2">
    <location>
        <begin position="314"/>
        <end position="348"/>
    </location>
</feature>
<feature type="glycosylation site" description="N-linked (GlcNAc...) asparagine" evidence="2">
    <location>
        <position position="285"/>
    </location>
</feature>
<feature type="disulfide bond" evidence="3">
    <location>
        <begin position="109"/>
        <end position="187"/>
    </location>
</feature>
<organism>
    <name type="scientific">Bos taurus</name>
    <name type="common">Bovine</name>
    <dbReference type="NCBI Taxonomy" id="9913"/>
    <lineage>
        <taxon>Eukaryota</taxon>
        <taxon>Metazoa</taxon>
        <taxon>Chordata</taxon>
        <taxon>Craniata</taxon>
        <taxon>Vertebrata</taxon>
        <taxon>Euteleostomi</taxon>
        <taxon>Mammalia</taxon>
        <taxon>Eutheria</taxon>
        <taxon>Laurasiatheria</taxon>
        <taxon>Artiodactyla</taxon>
        <taxon>Ruminantia</taxon>
        <taxon>Pecora</taxon>
        <taxon>Bovidae</taxon>
        <taxon>Bovinae</taxon>
        <taxon>Bos</taxon>
    </lineage>
</organism>